<accession>P10665</accession>
<accession>Q6DE78</accession>
<dbReference type="EC" id="2.7.11.1"/>
<dbReference type="EMBL" id="M20187">
    <property type="protein sequence ID" value="AAA49958.1"/>
    <property type="molecule type" value="mRNA"/>
</dbReference>
<dbReference type="EMBL" id="BC077262">
    <property type="protein sequence ID" value="AAH77262.1"/>
    <property type="molecule type" value="mRNA"/>
</dbReference>
<dbReference type="PIR" id="B30001">
    <property type="entry name" value="B30001"/>
</dbReference>
<dbReference type="RefSeq" id="NP_001085310.1">
    <property type="nucleotide sequence ID" value="NM_001091841.1"/>
</dbReference>
<dbReference type="SMR" id="P10665"/>
<dbReference type="BioGRID" id="101893">
    <property type="interactions" value="1"/>
</dbReference>
<dbReference type="IntAct" id="P10665">
    <property type="interactions" value="1"/>
</dbReference>
<dbReference type="MINT" id="P10665"/>
<dbReference type="DNASU" id="443729"/>
<dbReference type="GeneID" id="443729"/>
<dbReference type="KEGG" id="xla:443729"/>
<dbReference type="AGR" id="Xenbase:XB-GENE-6487851"/>
<dbReference type="CTD" id="443729"/>
<dbReference type="Xenbase" id="XB-GENE-6487851">
    <property type="gene designation" value="rps6ka6.S"/>
</dbReference>
<dbReference type="OrthoDB" id="63267at2759"/>
<dbReference type="BRENDA" id="2.7.11.1">
    <property type="organism ID" value="6725"/>
</dbReference>
<dbReference type="PRO" id="PR:P10665"/>
<dbReference type="Proteomes" id="UP000186698">
    <property type="component" value="Chromosome 2S"/>
</dbReference>
<dbReference type="Bgee" id="443729">
    <property type="expression patterns" value="Expressed in zone of skin and 19 other cell types or tissues"/>
</dbReference>
<dbReference type="GO" id="GO:0005737">
    <property type="term" value="C:cytoplasm"/>
    <property type="evidence" value="ECO:0000318"/>
    <property type="project" value="GO_Central"/>
</dbReference>
<dbReference type="GO" id="GO:0005654">
    <property type="term" value="C:nucleoplasm"/>
    <property type="evidence" value="ECO:0000318"/>
    <property type="project" value="GO_Central"/>
</dbReference>
<dbReference type="GO" id="GO:0005524">
    <property type="term" value="F:ATP binding"/>
    <property type="evidence" value="ECO:0007669"/>
    <property type="project" value="UniProtKB-KW"/>
</dbReference>
<dbReference type="GO" id="GO:0000287">
    <property type="term" value="F:magnesium ion binding"/>
    <property type="evidence" value="ECO:0007669"/>
    <property type="project" value="InterPro"/>
</dbReference>
<dbReference type="GO" id="GO:0106310">
    <property type="term" value="F:protein serine kinase activity"/>
    <property type="evidence" value="ECO:0007669"/>
    <property type="project" value="RHEA"/>
</dbReference>
<dbReference type="GO" id="GO:0004711">
    <property type="term" value="F:ribosomal protein S6 kinase activity"/>
    <property type="evidence" value="ECO:0000318"/>
    <property type="project" value="GO_Central"/>
</dbReference>
<dbReference type="GO" id="GO:0045893">
    <property type="term" value="P:positive regulation of DNA-templated transcription"/>
    <property type="evidence" value="ECO:0000318"/>
    <property type="project" value="GO_Central"/>
</dbReference>
<dbReference type="GO" id="GO:0038202">
    <property type="term" value="P:TORC1 signaling"/>
    <property type="evidence" value="ECO:0000318"/>
    <property type="project" value="GO_Central"/>
</dbReference>
<dbReference type="CDD" id="cd05582">
    <property type="entry name" value="STKc_RSK_N"/>
    <property type="match status" value="1"/>
</dbReference>
<dbReference type="FunFam" id="1.10.510.10:FF:000010">
    <property type="entry name" value="Ribosomal protein S6 kinase"/>
    <property type="match status" value="1"/>
</dbReference>
<dbReference type="FunFam" id="1.10.510.10:FF:000041">
    <property type="entry name" value="Ribosomal protein S6 kinase"/>
    <property type="match status" value="1"/>
</dbReference>
<dbReference type="FunFam" id="3.30.200.20:FF:000013">
    <property type="entry name" value="Ribosomal protein S6 kinase"/>
    <property type="match status" value="1"/>
</dbReference>
<dbReference type="FunFam" id="3.30.200.20:FF:000121">
    <property type="entry name" value="Ribosomal protein S6 kinase"/>
    <property type="match status" value="1"/>
</dbReference>
<dbReference type="Gene3D" id="3.30.200.20">
    <property type="entry name" value="Phosphorylase Kinase, domain 1"/>
    <property type="match status" value="2"/>
</dbReference>
<dbReference type="Gene3D" id="1.10.510.10">
    <property type="entry name" value="Transferase(Phosphotransferase) domain 1"/>
    <property type="match status" value="2"/>
</dbReference>
<dbReference type="InterPro" id="IPR000961">
    <property type="entry name" value="AGC-kinase_C"/>
</dbReference>
<dbReference type="InterPro" id="IPR011009">
    <property type="entry name" value="Kinase-like_dom_sf"/>
</dbReference>
<dbReference type="InterPro" id="IPR017892">
    <property type="entry name" value="Pkinase_C"/>
</dbReference>
<dbReference type="InterPro" id="IPR000719">
    <property type="entry name" value="Prot_kinase_dom"/>
</dbReference>
<dbReference type="InterPro" id="IPR017441">
    <property type="entry name" value="Protein_kinase_ATP_BS"/>
</dbReference>
<dbReference type="InterPro" id="IPR016239">
    <property type="entry name" value="Ribosomal_S6_kinase_II"/>
</dbReference>
<dbReference type="InterPro" id="IPR041906">
    <property type="entry name" value="RSK_N"/>
</dbReference>
<dbReference type="InterPro" id="IPR008271">
    <property type="entry name" value="Ser/Thr_kinase_AS"/>
</dbReference>
<dbReference type="PANTHER" id="PTHR24351">
    <property type="entry name" value="RIBOSOMAL PROTEIN S6 KINASE"/>
    <property type="match status" value="1"/>
</dbReference>
<dbReference type="Pfam" id="PF00069">
    <property type="entry name" value="Pkinase"/>
    <property type="match status" value="2"/>
</dbReference>
<dbReference type="Pfam" id="PF00433">
    <property type="entry name" value="Pkinase_C"/>
    <property type="match status" value="1"/>
</dbReference>
<dbReference type="PIRSF" id="PIRSF000606">
    <property type="entry name" value="Ribsml_S6_kin_2"/>
    <property type="match status" value="1"/>
</dbReference>
<dbReference type="SMART" id="SM00133">
    <property type="entry name" value="S_TK_X"/>
    <property type="match status" value="1"/>
</dbReference>
<dbReference type="SMART" id="SM00220">
    <property type="entry name" value="S_TKc"/>
    <property type="match status" value="2"/>
</dbReference>
<dbReference type="SUPFAM" id="SSF56112">
    <property type="entry name" value="Protein kinase-like (PK-like)"/>
    <property type="match status" value="2"/>
</dbReference>
<dbReference type="PROSITE" id="PS51285">
    <property type="entry name" value="AGC_KINASE_CTER"/>
    <property type="match status" value="1"/>
</dbReference>
<dbReference type="PROSITE" id="PS00107">
    <property type="entry name" value="PROTEIN_KINASE_ATP"/>
    <property type="match status" value="2"/>
</dbReference>
<dbReference type="PROSITE" id="PS50011">
    <property type="entry name" value="PROTEIN_KINASE_DOM"/>
    <property type="match status" value="2"/>
</dbReference>
<dbReference type="PROSITE" id="PS00108">
    <property type="entry name" value="PROTEIN_KINASE_ST"/>
    <property type="match status" value="2"/>
</dbReference>
<reference key="1">
    <citation type="journal article" date="1988" name="Proc. Natl. Acad. Sci. U.S.A.">
        <title>A Xenopus ribosomal protein S6 kinase has two apparent kinase domains that are each similar to distinct protein kinases.</title>
        <authorList>
            <person name="Jones S.W."/>
            <person name="Erikson E."/>
            <person name="Blenis J."/>
            <person name="Maller J.L."/>
            <person name="Erikson R.L."/>
        </authorList>
    </citation>
    <scope>NUCLEOTIDE SEQUENCE [MRNA]</scope>
    <scope>PARTIAL PROTEIN SEQUENCE</scope>
</reference>
<reference key="2">
    <citation type="submission" date="2004-07" db="EMBL/GenBank/DDBJ databases">
        <authorList>
            <consortium name="NIH - Xenopus Gene Collection (XGC) project"/>
        </authorList>
    </citation>
    <scope>NUCLEOTIDE SEQUENCE [LARGE SCALE MRNA]</scope>
    <source>
        <tissue>Ovary</tissue>
    </source>
</reference>
<proteinExistence type="evidence at protein level"/>
<gene>
    <name type="primary">rps6ka</name>
</gene>
<feature type="chain" id="PRO_0000086211" description="Ribosomal protein S6 kinase 2 alpha">
    <location>
        <begin position="1"/>
        <end position="733"/>
    </location>
</feature>
<feature type="domain" description="Protein kinase 1" evidence="2">
    <location>
        <begin position="62"/>
        <end position="321"/>
    </location>
</feature>
<feature type="domain" description="AGC-kinase C-terminal" evidence="3">
    <location>
        <begin position="322"/>
        <end position="391"/>
    </location>
</feature>
<feature type="domain" description="Protein kinase 2" evidence="2">
    <location>
        <begin position="416"/>
        <end position="673"/>
    </location>
</feature>
<feature type="region of interest" description="Disordered" evidence="4">
    <location>
        <begin position="18"/>
        <end position="38"/>
    </location>
</feature>
<feature type="active site" description="Proton acceptor" evidence="1">
    <location>
        <position position="187"/>
    </location>
</feature>
<feature type="active site" description="Proton acceptor" evidence="1">
    <location>
        <position position="533"/>
    </location>
</feature>
<feature type="binding site" evidence="2">
    <location>
        <begin position="68"/>
        <end position="76"/>
    </location>
    <ligand>
        <name>ATP</name>
        <dbReference type="ChEBI" id="CHEBI:30616"/>
    </ligand>
</feature>
<feature type="binding site" evidence="2">
    <location>
        <position position="94"/>
    </location>
    <ligand>
        <name>ATP</name>
        <dbReference type="ChEBI" id="CHEBI:30616"/>
    </ligand>
</feature>
<feature type="binding site" evidence="2">
    <location>
        <begin position="422"/>
        <end position="430"/>
    </location>
    <ligand>
        <name>ATP</name>
        <dbReference type="ChEBI" id="CHEBI:30616"/>
    </ligand>
</feature>
<feature type="binding site" evidence="2">
    <location>
        <position position="445"/>
    </location>
    <ligand>
        <name>ATP</name>
        <dbReference type="ChEBI" id="CHEBI:30616"/>
    </ligand>
</feature>
<feature type="modified residue" description="Phosphoserine" evidence="1">
    <location>
        <position position="221"/>
    </location>
</feature>
<feature type="modified residue" description="Phosphothreonine" evidence="1">
    <location>
        <position position="359"/>
    </location>
</feature>
<feature type="modified residue" description="Phosphoserine" evidence="1">
    <location>
        <position position="363"/>
    </location>
</feature>
<feature type="modified residue" description="Phosphoserine; by autocatalysis" evidence="1">
    <location>
        <position position="380"/>
    </location>
</feature>
<feature type="modified residue" description="Phosphothreonine" evidence="1">
    <location>
        <position position="571"/>
    </location>
</feature>
<feature type="modified residue" description="Phosphoserine" evidence="1">
    <location>
        <position position="730"/>
    </location>
</feature>
<name>KS6AA_XENLA</name>
<protein>
    <recommendedName>
        <fullName>Ribosomal protein S6 kinase 2 alpha</fullName>
        <ecNumber>2.7.11.1</ecNumber>
    </recommendedName>
    <alternativeName>
        <fullName>MAP kinase-activated protein kinase 1</fullName>
        <shortName>MAPK-activated protein kinase 1</shortName>
        <shortName>MAPKAP kinase 1</shortName>
        <shortName>MAPKAPK-1</shortName>
    </alternativeName>
    <alternativeName>
        <fullName>Ribosomal protein S6 kinase II alpha</fullName>
        <shortName>S6KII-alpha</shortName>
    </alternativeName>
    <alternativeName>
        <fullName>p90-RSK</fullName>
    </alternativeName>
</protein>
<keyword id="KW-0067">ATP-binding</keyword>
<keyword id="KW-0903">Direct protein sequencing</keyword>
<keyword id="KW-0418">Kinase</keyword>
<keyword id="KW-0547">Nucleotide-binding</keyword>
<keyword id="KW-0597">Phosphoprotein</keyword>
<keyword id="KW-1185">Reference proteome</keyword>
<keyword id="KW-0677">Repeat</keyword>
<keyword id="KW-0723">Serine/threonine-protein kinase</keyword>
<keyword id="KW-0808">Transferase</keyword>
<sequence>MPLAQLVNLWPEVAVVHEDPENGHGSPEEGGRHTSKDEVVVKEFPITHHVKEGSEKADQSDFVLLKVLGQGSFGKVFLVRKITPPDANQLYAMKVLKKATLKVRDRVRTKMERDILADVHHPFVVRLHYAFQTEGKLYLILDFLRGGDLFTRLSKEVMFTEEDVKFYLAELALGLDHLHSLGIIYRDLKPENILLDEEGHIKLTDFGLSKEAIDHEKKAYSFCGTVEYMAPEVVNRQGHSHSADWWSYGVLMFEMLTGSLPFQGKDRKETMTLILKAKLGMPQFLSNEAQSLLRALFKRNPTNRLGSAMEGAEEIKRQPFFSTIDWNKLFRREMSPPFKPAVTQADDTYYFDTEFTSRTPKDSPGIPPSAGAHQLFRGFSFVAPALVEEDAKKTSSPPVLSVPKTHSKNILFMDVYTVRETIGVGSYSVCKRCVHKGTNMEYAVKVIDKTKRDPSEEIEILRRYGQHPNIIALKDVYKEGNSIYVVTELMRGGELLDRILRQKFFSEREASSVLFTVCKTVENLHSQGVVHRDLKPSNILYVDESGDPESIRICDFGFAKQLRADNGLLMTPCYTANFVAPEVLKRQGYDEGCDIWSLGILLYTMLAGYTPFANGLGDTPEEILARIGSGKFTLRGGNWNTVSAAAKDLVSRMLHVDPHKRLTAKQVLQHEWITKRDALPQSQLNRQDVHLVKGAMAATYSALNSSKPTPLLQPIKSSILAQRRVKKLPSTTL</sequence>
<organism>
    <name type="scientific">Xenopus laevis</name>
    <name type="common">African clawed frog</name>
    <dbReference type="NCBI Taxonomy" id="8355"/>
    <lineage>
        <taxon>Eukaryota</taxon>
        <taxon>Metazoa</taxon>
        <taxon>Chordata</taxon>
        <taxon>Craniata</taxon>
        <taxon>Vertebrata</taxon>
        <taxon>Euteleostomi</taxon>
        <taxon>Amphibia</taxon>
        <taxon>Batrachia</taxon>
        <taxon>Anura</taxon>
        <taxon>Pipoidea</taxon>
        <taxon>Pipidae</taxon>
        <taxon>Xenopodinae</taxon>
        <taxon>Xenopus</taxon>
        <taxon>Xenopus</taxon>
    </lineage>
</organism>
<comment type="function">
    <text evidence="1">Serine/threonine kinase that may play a role in mediating the growth-factor and stress induced activation of transcription.</text>
</comment>
<comment type="catalytic activity">
    <reaction>
        <text>L-seryl-[protein] + ATP = O-phospho-L-seryl-[protein] + ADP + H(+)</text>
        <dbReference type="Rhea" id="RHEA:17989"/>
        <dbReference type="Rhea" id="RHEA-COMP:9863"/>
        <dbReference type="Rhea" id="RHEA-COMP:11604"/>
        <dbReference type="ChEBI" id="CHEBI:15378"/>
        <dbReference type="ChEBI" id="CHEBI:29999"/>
        <dbReference type="ChEBI" id="CHEBI:30616"/>
        <dbReference type="ChEBI" id="CHEBI:83421"/>
        <dbReference type="ChEBI" id="CHEBI:456216"/>
        <dbReference type="EC" id="2.7.11.1"/>
    </reaction>
</comment>
<comment type="catalytic activity">
    <reaction>
        <text>L-threonyl-[protein] + ATP = O-phospho-L-threonyl-[protein] + ADP + H(+)</text>
        <dbReference type="Rhea" id="RHEA:46608"/>
        <dbReference type="Rhea" id="RHEA-COMP:11060"/>
        <dbReference type="Rhea" id="RHEA-COMP:11605"/>
        <dbReference type="ChEBI" id="CHEBI:15378"/>
        <dbReference type="ChEBI" id="CHEBI:30013"/>
        <dbReference type="ChEBI" id="CHEBI:30616"/>
        <dbReference type="ChEBI" id="CHEBI:61977"/>
        <dbReference type="ChEBI" id="CHEBI:456216"/>
        <dbReference type="EC" id="2.7.11.1"/>
    </reaction>
</comment>
<comment type="cofactor">
    <cofactor evidence="1">
        <name>Mg(2+)</name>
        <dbReference type="ChEBI" id="CHEBI:18420"/>
    </cofactor>
</comment>
<comment type="activity regulation">
    <text evidence="1">Activated by multiple phosphorylations on threonine and serine residues.</text>
</comment>
<comment type="PTM">
    <text evidence="1">Autophosphorylated on Ser-380, as part of the activation process.</text>
</comment>
<comment type="similarity">
    <text evidence="5">Belongs to the protein kinase superfamily. AGC Ser/Thr protein kinase family. S6 kinase subfamily.</text>
</comment>
<evidence type="ECO:0000250" key="1"/>
<evidence type="ECO:0000255" key="2">
    <source>
        <dbReference type="PROSITE-ProRule" id="PRU00159"/>
    </source>
</evidence>
<evidence type="ECO:0000255" key="3">
    <source>
        <dbReference type="PROSITE-ProRule" id="PRU00618"/>
    </source>
</evidence>
<evidence type="ECO:0000256" key="4">
    <source>
        <dbReference type="SAM" id="MobiDB-lite"/>
    </source>
</evidence>
<evidence type="ECO:0000305" key="5"/>